<comment type="function">
    <text evidence="1">NDH-1 shuttles electrons from NADH, via FMN and iron-sulfur (Fe-S) centers, to quinones in the respiratory chain. The immediate electron acceptor for the enzyme in this species is believed to be ubiquinone. Couples the redox reaction to proton translocation (for every two electrons transferred, four hydrogen ions are translocated across the cytoplasmic membrane), and thus conserves the redox energy in a proton gradient.</text>
</comment>
<comment type="catalytic activity">
    <reaction evidence="1">
        <text>a quinone + NADH + 5 H(+)(in) = a quinol + NAD(+) + 4 H(+)(out)</text>
        <dbReference type="Rhea" id="RHEA:57888"/>
        <dbReference type="ChEBI" id="CHEBI:15378"/>
        <dbReference type="ChEBI" id="CHEBI:24646"/>
        <dbReference type="ChEBI" id="CHEBI:57540"/>
        <dbReference type="ChEBI" id="CHEBI:57945"/>
        <dbReference type="ChEBI" id="CHEBI:132124"/>
    </reaction>
</comment>
<comment type="cofactor">
    <cofactor evidence="1">
        <name>[4Fe-4S] cluster</name>
        <dbReference type="ChEBI" id="CHEBI:49883"/>
    </cofactor>
    <text evidence="1">Binds 1 [4Fe-4S] cluster.</text>
</comment>
<comment type="subunit">
    <text evidence="1">NDH-1 is composed of 14 different subunits. Subunits NuoB, C, D, E, F, and G constitute the peripheral sector of the complex.</text>
</comment>
<comment type="subcellular location">
    <subcellularLocation>
        <location evidence="1">Cell inner membrane</location>
        <topology evidence="1">Peripheral membrane protein</topology>
        <orientation evidence="1">Cytoplasmic side</orientation>
    </subcellularLocation>
</comment>
<comment type="similarity">
    <text evidence="1">Belongs to the complex I 20 kDa subunit family.</text>
</comment>
<protein>
    <recommendedName>
        <fullName evidence="1">NADH-quinone oxidoreductase subunit B</fullName>
        <ecNumber evidence="1">7.1.1.-</ecNumber>
    </recommendedName>
    <alternativeName>
        <fullName evidence="1">NADH dehydrogenase I subunit B</fullName>
    </alternativeName>
    <alternativeName>
        <fullName evidence="1">NDH-1 subunit B</fullName>
    </alternativeName>
</protein>
<name>NUOB_BDEBA</name>
<reference key="1">
    <citation type="journal article" date="2004" name="Science">
        <title>A predator unmasked: life cycle of Bdellovibrio bacteriovorus from a genomic perspective.</title>
        <authorList>
            <person name="Rendulic S."/>
            <person name="Jagtap P."/>
            <person name="Rosinus A."/>
            <person name="Eppinger M."/>
            <person name="Baar C."/>
            <person name="Lanz C."/>
            <person name="Keller H."/>
            <person name="Lambert C."/>
            <person name="Evans K.J."/>
            <person name="Goesmann A."/>
            <person name="Meyer F."/>
            <person name="Sockett R.E."/>
            <person name="Schuster S.C."/>
        </authorList>
    </citation>
    <scope>NUCLEOTIDE SEQUENCE [LARGE SCALE GENOMIC DNA]</scope>
    <source>
        <strain>ATCC 15356 / DSM 50701 / NCIMB 9529 / HD100</strain>
    </source>
</reference>
<evidence type="ECO:0000255" key="1">
    <source>
        <dbReference type="HAMAP-Rule" id="MF_01356"/>
    </source>
</evidence>
<gene>
    <name evidence="1" type="primary">nuoB</name>
    <name type="ordered locus">Bd3086</name>
</gene>
<organism>
    <name type="scientific">Bdellovibrio bacteriovorus (strain ATCC 15356 / DSM 50701 / NCIMB 9529 / HD100)</name>
    <dbReference type="NCBI Taxonomy" id="264462"/>
    <lineage>
        <taxon>Bacteria</taxon>
        <taxon>Pseudomonadati</taxon>
        <taxon>Bdellovibrionota</taxon>
        <taxon>Bdellovibrionia</taxon>
        <taxon>Bdellovibrionales</taxon>
        <taxon>Pseudobdellovibrionaceae</taxon>
        <taxon>Bdellovibrio</taxon>
    </lineage>
</organism>
<sequence length="187" mass="20640">MHNEQVQGLVSHDGMTGTQAVDDMSRGFAFTSKLDAIVAWGRKNSLWPMPYGTACCGIEFMSVMGPKYDLARFGAEVARFSPRQADLLVVAGTITEKMAPVIVRIYQQMLEPKYVLSMGACASSGGFYRAYHVLQGVDKVIPVDVYIPGCPPTPEAVMDGIMALQRMIATNQPRPWKDNWKSPYEQA</sequence>
<dbReference type="EC" id="7.1.1.-" evidence="1"/>
<dbReference type="EMBL" id="BX842654">
    <property type="protein sequence ID" value="CAE80849.1"/>
    <property type="molecule type" value="Genomic_DNA"/>
</dbReference>
<dbReference type="SMR" id="Q6MIR4"/>
<dbReference type="STRING" id="264462.Bd3086"/>
<dbReference type="KEGG" id="bba:Bd3086"/>
<dbReference type="eggNOG" id="COG0377">
    <property type="taxonomic scope" value="Bacteria"/>
</dbReference>
<dbReference type="HOGENOM" id="CLU_055737_7_3_7"/>
<dbReference type="Proteomes" id="UP000008080">
    <property type="component" value="Chromosome"/>
</dbReference>
<dbReference type="GO" id="GO:0005886">
    <property type="term" value="C:plasma membrane"/>
    <property type="evidence" value="ECO:0007669"/>
    <property type="project" value="UniProtKB-SubCell"/>
</dbReference>
<dbReference type="GO" id="GO:0045271">
    <property type="term" value="C:respiratory chain complex I"/>
    <property type="evidence" value="ECO:0007669"/>
    <property type="project" value="TreeGrafter"/>
</dbReference>
<dbReference type="GO" id="GO:0051539">
    <property type="term" value="F:4 iron, 4 sulfur cluster binding"/>
    <property type="evidence" value="ECO:0007669"/>
    <property type="project" value="UniProtKB-KW"/>
</dbReference>
<dbReference type="GO" id="GO:0005506">
    <property type="term" value="F:iron ion binding"/>
    <property type="evidence" value="ECO:0007669"/>
    <property type="project" value="UniProtKB-UniRule"/>
</dbReference>
<dbReference type="GO" id="GO:0008137">
    <property type="term" value="F:NADH dehydrogenase (ubiquinone) activity"/>
    <property type="evidence" value="ECO:0007669"/>
    <property type="project" value="InterPro"/>
</dbReference>
<dbReference type="GO" id="GO:0050136">
    <property type="term" value="F:NADH:ubiquinone reductase (non-electrogenic) activity"/>
    <property type="evidence" value="ECO:0007669"/>
    <property type="project" value="UniProtKB-UniRule"/>
</dbReference>
<dbReference type="GO" id="GO:0048038">
    <property type="term" value="F:quinone binding"/>
    <property type="evidence" value="ECO:0007669"/>
    <property type="project" value="UniProtKB-KW"/>
</dbReference>
<dbReference type="GO" id="GO:0009060">
    <property type="term" value="P:aerobic respiration"/>
    <property type="evidence" value="ECO:0007669"/>
    <property type="project" value="TreeGrafter"/>
</dbReference>
<dbReference type="GO" id="GO:0015990">
    <property type="term" value="P:electron transport coupled proton transport"/>
    <property type="evidence" value="ECO:0007669"/>
    <property type="project" value="TreeGrafter"/>
</dbReference>
<dbReference type="FunFam" id="3.40.50.12280:FF:000002">
    <property type="entry name" value="NADH-quinone oxidoreductase subunit B"/>
    <property type="match status" value="1"/>
</dbReference>
<dbReference type="Gene3D" id="3.40.50.12280">
    <property type="match status" value="1"/>
</dbReference>
<dbReference type="HAMAP" id="MF_01356">
    <property type="entry name" value="NDH1_NuoB"/>
    <property type="match status" value="1"/>
</dbReference>
<dbReference type="InterPro" id="IPR006137">
    <property type="entry name" value="NADH_UbQ_OxRdtase-like_20kDa"/>
</dbReference>
<dbReference type="InterPro" id="IPR006138">
    <property type="entry name" value="NADH_UQ_OxRdtase_20Kd_su"/>
</dbReference>
<dbReference type="NCBIfam" id="TIGR01957">
    <property type="entry name" value="nuoB_fam"/>
    <property type="match status" value="1"/>
</dbReference>
<dbReference type="NCBIfam" id="NF005012">
    <property type="entry name" value="PRK06411.1"/>
    <property type="match status" value="1"/>
</dbReference>
<dbReference type="PANTHER" id="PTHR11995">
    <property type="entry name" value="NADH DEHYDROGENASE"/>
    <property type="match status" value="1"/>
</dbReference>
<dbReference type="PANTHER" id="PTHR11995:SF14">
    <property type="entry name" value="NADH DEHYDROGENASE [UBIQUINONE] IRON-SULFUR PROTEIN 7, MITOCHONDRIAL"/>
    <property type="match status" value="1"/>
</dbReference>
<dbReference type="Pfam" id="PF01058">
    <property type="entry name" value="Oxidored_q6"/>
    <property type="match status" value="1"/>
</dbReference>
<dbReference type="SUPFAM" id="SSF56770">
    <property type="entry name" value="HydA/Nqo6-like"/>
    <property type="match status" value="1"/>
</dbReference>
<dbReference type="PROSITE" id="PS01150">
    <property type="entry name" value="COMPLEX1_20K"/>
    <property type="match status" value="1"/>
</dbReference>
<proteinExistence type="inferred from homology"/>
<feature type="chain" id="PRO_0000376149" description="NADH-quinone oxidoreductase subunit B">
    <location>
        <begin position="1"/>
        <end position="187"/>
    </location>
</feature>
<feature type="binding site" evidence="1">
    <location>
        <position position="55"/>
    </location>
    <ligand>
        <name>[4Fe-4S] cluster</name>
        <dbReference type="ChEBI" id="CHEBI:49883"/>
    </ligand>
</feature>
<feature type="binding site" evidence="1">
    <location>
        <position position="56"/>
    </location>
    <ligand>
        <name>[4Fe-4S] cluster</name>
        <dbReference type="ChEBI" id="CHEBI:49883"/>
    </ligand>
</feature>
<feature type="binding site" evidence="1">
    <location>
        <position position="121"/>
    </location>
    <ligand>
        <name>[4Fe-4S] cluster</name>
        <dbReference type="ChEBI" id="CHEBI:49883"/>
    </ligand>
</feature>
<feature type="binding site" evidence="1">
    <location>
        <position position="150"/>
    </location>
    <ligand>
        <name>[4Fe-4S] cluster</name>
        <dbReference type="ChEBI" id="CHEBI:49883"/>
    </ligand>
</feature>
<accession>Q6MIR4</accession>
<keyword id="KW-0004">4Fe-4S</keyword>
<keyword id="KW-0997">Cell inner membrane</keyword>
<keyword id="KW-1003">Cell membrane</keyword>
<keyword id="KW-0408">Iron</keyword>
<keyword id="KW-0411">Iron-sulfur</keyword>
<keyword id="KW-0472">Membrane</keyword>
<keyword id="KW-0479">Metal-binding</keyword>
<keyword id="KW-0520">NAD</keyword>
<keyword id="KW-0874">Quinone</keyword>
<keyword id="KW-1185">Reference proteome</keyword>
<keyword id="KW-1278">Translocase</keyword>
<keyword id="KW-0813">Transport</keyword>
<keyword id="KW-0830">Ubiquinone</keyword>